<protein>
    <recommendedName>
        <fullName evidence="1">Small ribosomal subunit protein uS4</fullName>
    </recommendedName>
    <alternativeName>
        <fullName evidence="2">30S ribosomal protein S4</fullName>
    </alternativeName>
</protein>
<feature type="chain" id="PRO_1000140723" description="Small ribosomal subunit protein uS4">
    <location>
        <begin position="1"/>
        <end position="206"/>
    </location>
</feature>
<feature type="domain" description="S4 RNA-binding" evidence="1">
    <location>
        <begin position="98"/>
        <end position="155"/>
    </location>
</feature>
<name>RS4_DICTD</name>
<organism>
    <name type="scientific">Dictyoglomus turgidum (strain DSM 6724 / Z-1310)</name>
    <dbReference type="NCBI Taxonomy" id="515635"/>
    <lineage>
        <taxon>Bacteria</taxon>
        <taxon>Pseudomonadati</taxon>
        <taxon>Dictyoglomota</taxon>
        <taxon>Dictyoglomia</taxon>
        <taxon>Dictyoglomales</taxon>
        <taxon>Dictyoglomaceae</taxon>
        <taxon>Dictyoglomus</taxon>
    </lineage>
</organism>
<comment type="function">
    <text evidence="1">One of the primary rRNA binding proteins, it binds directly to 16S rRNA where it nucleates assembly of the body of the 30S subunit.</text>
</comment>
<comment type="function">
    <text evidence="1">With S5 and S12 plays an important role in translational accuracy.</text>
</comment>
<comment type="subunit">
    <text evidence="1">Part of the 30S ribosomal subunit. Contacts protein S5. The interaction surface between S4 and S5 is involved in control of translational fidelity.</text>
</comment>
<comment type="similarity">
    <text evidence="1">Belongs to the universal ribosomal protein uS4 family.</text>
</comment>
<gene>
    <name evidence="1" type="primary">rpsD</name>
    <name type="ordered locus">Dtur_1007</name>
</gene>
<proteinExistence type="inferred from homology"/>
<dbReference type="EMBL" id="CP001251">
    <property type="protein sequence ID" value="ACK42287.1"/>
    <property type="molecule type" value="Genomic_DNA"/>
</dbReference>
<dbReference type="RefSeq" id="WP_012583370.1">
    <property type="nucleotide sequence ID" value="NC_011661.1"/>
</dbReference>
<dbReference type="RefSeq" id="YP_002352901.1">
    <property type="nucleotide sequence ID" value="NC_011661.1"/>
</dbReference>
<dbReference type="SMR" id="B8E1F9"/>
<dbReference type="FunCoup" id="B8E1F9">
    <property type="interactions" value="445"/>
</dbReference>
<dbReference type="STRING" id="515635.Dtur_1007"/>
<dbReference type="EnsemblBacteria" id="ACK42287">
    <property type="protein sequence ID" value="ACK42287"/>
    <property type="gene ID" value="Dtur_1007"/>
</dbReference>
<dbReference type="KEGG" id="dtu:Dtur_1007"/>
<dbReference type="PATRIC" id="fig|515635.4.peg.1044"/>
<dbReference type="eggNOG" id="COG0522">
    <property type="taxonomic scope" value="Bacteria"/>
</dbReference>
<dbReference type="HOGENOM" id="CLU_092403_0_2_0"/>
<dbReference type="InParanoid" id="B8E1F9"/>
<dbReference type="OrthoDB" id="9803672at2"/>
<dbReference type="Proteomes" id="UP000007719">
    <property type="component" value="Chromosome"/>
</dbReference>
<dbReference type="GO" id="GO:0015935">
    <property type="term" value="C:small ribosomal subunit"/>
    <property type="evidence" value="ECO:0000318"/>
    <property type="project" value="GO_Central"/>
</dbReference>
<dbReference type="GO" id="GO:0019843">
    <property type="term" value="F:rRNA binding"/>
    <property type="evidence" value="ECO:0000318"/>
    <property type="project" value="GO_Central"/>
</dbReference>
<dbReference type="GO" id="GO:0003735">
    <property type="term" value="F:structural constituent of ribosome"/>
    <property type="evidence" value="ECO:0000318"/>
    <property type="project" value="GO_Central"/>
</dbReference>
<dbReference type="GO" id="GO:0042274">
    <property type="term" value="P:ribosomal small subunit biogenesis"/>
    <property type="evidence" value="ECO:0000318"/>
    <property type="project" value="GO_Central"/>
</dbReference>
<dbReference type="GO" id="GO:0006412">
    <property type="term" value="P:translation"/>
    <property type="evidence" value="ECO:0007669"/>
    <property type="project" value="UniProtKB-UniRule"/>
</dbReference>
<dbReference type="CDD" id="cd00165">
    <property type="entry name" value="S4"/>
    <property type="match status" value="1"/>
</dbReference>
<dbReference type="FunFam" id="1.10.1050.10:FF:000001">
    <property type="entry name" value="30S ribosomal protein S4"/>
    <property type="match status" value="1"/>
</dbReference>
<dbReference type="FunFam" id="3.10.290.10:FF:000001">
    <property type="entry name" value="30S ribosomal protein S4"/>
    <property type="match status" value="1"/>
</dbReference>
<dbReference type="Gene3D" id="1.10.1050.10">
    <property type="entry name" value="Ribosomal Protein S4 Delta 41, Chain A, domain 1"/>
    <property type="match status" value="1"/>
</dbReference>
<dbReference type="Gene3D" id="3.10.290.10">
    <property type="entry name" value="RNA-binding S4 domain"/>
    <property type="match status" value="1"/>
</dbReference>
<dbReference type="HAMAP" id="MF_01306_B">
    <property type="entry name" value="Ribosomal_uS4_B"/>
    <property type="match status" value="1"/>
</dbReference>
<dbReference type="InterPro" id="IPR022801">
    <property type="entry name" value="Ribosomal_uS4"/>
</dbReference>
<dbReference type="InterPro" id="IPR005709">
    <property type="entry name" value="Ribosomal_uS4_bac-type"/>
</dbReference>
<dbReference type="InterPro" id="IPR018079">
    <property type="entry name" value="Ribosomal_uS4_CS"/>
</dbReference>
<dbReference type="InterPro" id="IPR001912">
    <property type="entry name" value="Ribosomal_uS4_N"/>
</dbReference>
<dbReference type="InterPro" id="IPR002942">
    <property type="entry name" value="S4_RNA-bd"/>
</dbReference>
<dbReference type="InterPro" id="IPR036986">
    <property type="entry name" value="S4_RNA-bd_sf"/>
</dbReference>
<dbReference type="NCBIfam" id="NF003717">
    <property type="entry name" value="PRK05327.1"/>
    <property type="match status" value="1"/>
</dbReference>
<dbReference type="NCBIfam" id="TIGR01017">
    <property type="entry name" value="rpsD_bact"/>
    <property type="match status" value="1"/>
</dbReference>
<dbReference type="PANTHER" id="PTHR11831">
    <property type="entry name" value="30S 40S RIBOSOMAL PROTEIN"/>
    <property type="match status" value="1"/>
</dbReference>
<dbReference type="PANTHER" id="PTHR11831:SF4">
    <property type="entry name" value="SMALL RIBOSOMAL SUBUNIT PROTEIN US4M"/>
    <property type="match status" value="1"/>
</dbReference>
<dbReference type="Pfam" id="PF00163">
    <property type="entry name" value="Ribosomal_S4"/>
    <property type="match status" value="1"/>
</dbReference>
<dbReference type="Pfam" id="PF01479">
    <property type="entry name" value="S4"/>
    <property type="match status" value="1"/>
</dbReference>
<dbReference type="SMART" id="SM01390">
    <property type="entry name" value="Ribosomal_S4"/>
    <property type="match status" value="1"/>
</dbReference>
<dbReference type="SMART" id="SM00363">
    <property type="entry name" value="S4"/>
    <property type="match status" value="1"/>
</dbReference>
<dbReference type="SUPFAM" id="SSF55174">
    <property type="entry name" value="Alpha-L RNA-binding motif"/>
    <property type="match status" value="1"/>
</dbReference>
<dbReference type="PROSITE" id="PS00632">
    <property type="entry name" value="RIBOSOMAL_S4"/>
    <property type="match status" value="1"/>
</dbReference>
<dbReference type="PROSITE" id="PS50889">
    <property type="entry name" value="S4"/>
    <property type="match status" value="1"/>
</dbReference>
<reference key="1">
    <citation type="journal article" date="2016" name="Front. Microbiol.">
        <title>The complete genome sequence of hyperthermophile Dictyoglomus turgidum DSM 6724 reveals a specialized carbohydrate fermentor.</title>
        <authorList>
            <person name="Brumm P.J."/>
            <person name="Gowda K."/>
            <person name="Robb F.T."/>
            <person name="Mead D.A."/>
        </authorList>
    </citation>
    <scope>NUCLEOTIDE SEQUENCE [LARGE SCALE GENOMIC DNA]</scope>
    <source>
        <strain>DSM 6724 / Z-1310</strain>
    </source>
</reference>
<evidence type="ECO:0000255" key="1">
    <source>
        <dbReference type="HAMAP-Rule" id="MF_01306"/>
    </source>
</evidence>
<evidence type="ECO:0000305" key="2"/>
<sequence>MARYTGPDCRLCRREGMKLFLKGTKCFSEKCPFERRPFPPGQHGRAQRKLTEYGLRLREKQRAKRIYGVLERQFRRYFEIASKGRGVTGERLLQLLETRLDNVVYRLGWALSRAQARQIVSHGKIAVNGKRVNIPSYNLKPGDVVELLDKDLIPVQEAISVFGNKSVPAWLELDRENLRGKVLRLPKREEIDTPVQEQLIVEFYSR</sequence>
<keyword id="KW-1185">Reference proteome</keyword>
<keyword id="KW-0687">Ribonucleoprotein</keyword>
<keyword id="KW-0689">Ribosomal protein</keyword>
<keyword id="KW-0694">RNA-binding</keyword>
<keyword id="KW-0699">rRNA-binding</keyword>
<accession>B8E1F9</accession>